<name>Y478_STAAR</name>
<keyword id="KW-0963">Cytoplasm</keyword>
<keyword id="KW-0238">DNA-binding</keyword>
<gene>
    <name type="ordered locus">SAR0478</name>
</gene>
<organism>
    <name type="scientific">Staphylococcus aureus (strain MRSA252)</name>
    <dbReference type="NCBI Taxonomy" id="282458"/>
    <lineage>
        <taxon>Bacteria</taxon>
        <taxon>Bacillati</taxon>
        <taxon>Bacillota</taxon>
        <taxon>Bacilli</taxon>
        <taxon>Bacillales</taxon>
        <taxon>Staphylococcaceae</taxon>
        <taxon>Staphylococcus</taxon>
    </lineage>
</organism>
<protein>
    <recommendedName>
        <fullName evidence="1">Nucleoid-associated protein SAR0478</fullName>
    </recommendedName>
</protein>
<accession>Q6GJJ4</accession>
<dbReference type="EMBL" id="BX571856">
    <property type="protein sequence ID" value="CAG39500.1"/>
    <property type="molecule type" value="Genomic_DNA"/>
</dbReference>
<dbReference type="RefSeq" id="WP_001213992.1">
    <property type="nucleotide sequence ID" value="NC_002952.2"/>
</dbReference>
<dbReference type="SMR" id="Q6GJJ4"/>
<dbReference type="KEGG" id="sar:SAR0478"/>
<dbReference type="HOGENOM" id="CLU_140930_1_0_9"/>
<dbReference type="Proteomes" id="UP000000596">
    <property type="component" value="Chromosome"/>
</dbReference>
<dbReference type="GO" id="GO:0043590">
    <property type="term" value="C:bacterial nucleoid"/>
    <property type="evidence" value="ECO:0007669"/>
    <property type="project" value="UniProtKB-UniRule"/>
</dbReference>
<dbReference type="GO" id="GO:0005829">
    <property type="term" value="C:cytosol"/>
    <property type="evidence" value="ECO:0007669"/>
    <property type="project" value="TreeGrafter"/>
</dbReference>
<dbReference type="GO" id="GO:0003677">
    <property type="term" value="F:DNA binding"/>
    <property type="evidence" value="ECO:0007669"/>
    <property type="project" value="UniProtKB-UniRule"/>
</dbReference>
<dbReference type="FunFam" id="3.30.1310.10:FF:000002">
    <property type="entry name" value="Nucleoid-associated protein IKC_06587"/>
    <property type="match status" value="1"/>
</dbReference>
<dbReference type="Gene3D" id="3.30.1310.10">
    <property type="entry name" value="Nucleoid-associated protein YbaB-like domain"/>
    <property type="match status" value="1"/>
</dbReference>
<dbReference type="HAMAP" id="MF_00274">
    <property type="entry name" value="DNA_YbaB_EbfC"/>
    <property type="match status" value="1"/>
</dbReference>
<dbReference type="InterPro" id="IPR036894">
    <property type="entry name" value="YbaB-like_sf"/>
</dbReference>
<dbReference type="InterPro" id="IPR004401">
    <property type="entry name" value="YbaB/EbfC"/>
</dbReference>
<dbReference type="NCBIfam" id="TIGR00103">
    <property type="entry name" value="DNA_YbaB_EbfC"/>
    <property type="match status" value="1"/>
</dbReference>
<dbReference type="PANTHER" id="PTHR33449">
    <property type="entry name" value="NUCLEOID-ASSOCIATED PROTEIN YBAB"/>
    <property type="match status" value="1"/>
</dbReference>
<dbReference type="PANTHER" id="PTHR33449:SF1">
    <property type="entry name" value="NUCLEOID-ASSOCIATED PROTEIN YBAB"/>
    <property type="match status" value="1"/>
</dbReference>
<dbReference type="Pfam" id="PF02575">
    <property type="entry name" value="YbaB_DNA_bd"/>
    <property type="match status" value="1"/>
</dbReference>
<dbReference type="PIRSF" id="PIRSF004555">
    <property type="entry name" value="UCP004555"/>
    <property type="match status" value="1"/>
</dbReference>
<dbReference type="SUPFAM" id="SSF82607">
    <property type="entry name" value="YbaB-like"/>
    <property type="match status" value="1"/>
</dbReference>
<comment type="function">
    <text evidence="1">Binds to DNA and alters its conformation. May be involved in regulation of gene expression, nucleoid organization and DNA protection.</text>
</comment>
<comment type="subunit">
    <text evidence="1">Homodimer.</text>
</comment>
<comment type="subcellular location">
    <subcellularLocation>
        <location evidence="1">Cytoplasm</location>
        <location evidence="1">Nucleoid</location>
    </subcellularLocation>
</comment>
<comment type="similarity">
    <text evidence="1">Belongs to the YbaB/EbfC family.</text>
</comment>
<feature type="chain" id="PRO_0000170438" description="Nucleoid-associated protein SAR0478">
    <location>
        <begin position="1"/>
        <end position="105"/>
    </location>
</feature>
<feature type="region of interest" description="Disordered" evidence="2">
    <location>
        <begin position="1"/>
        <end position="33"/>
    </location>
</feature>
<feature type="compositionally biased region" description="Low complexity" evidence="2">
    <location>
        <begin position="7"/>
        <end position="16"/>
    </location>
</feature>
<feature type="compositionally biased region" description="Basic and acidic residues" evidence="2">
    <location>
        <begin position="21"/>
        <end position="33"/>
    </location>
</feature>
<proteinExistence type="inferred from homology"/>
<reference key="1">
    <citation type="journal article" date="2004" name="Proc. Natl. Acad. Sci. U.S.A.">
        <title>Complete genomes of two clinical Staphylococcus aureus strains: evidence for the rapid evolution of virulence and drug resistance.</title>
        <authorList>
            <person name="Holden M.T.G."/>
            <person name="Feil E.J."/>
            <person name="Lindsay J.A."/>
            <person name="Peacock S.J."/>
            <person name="Day N.P.J."/>
            <person name="Enright M.C."/>
            <person name="Foster T.J."/>
            <person name="Moore C.E."/>
            <person name="Hurst L."/>
            <person name="Atkin R."/>
            <person name="Barron A."/>
            <person name="Bason N."/>
            <person name="Bentley S.D."/>
            <person name="Chillingworth C."/>
            <person name="Chillingworth T."/>
            <person name="Churcher C."/>
            <person name="Clark L."/>
            <person name="Corton C."/>
            <person name="Cronin A."/>
            <person name="Doggett J."/>
            <person name="Dowd L."/>
            <person name="Feltwell T."/>
            <person name="Hance Z."/>
            <person name="Harris B."/>
            <person name="Hauser H."/>
            <person name="Holroyd S."/>
            <person name="Jagels K."/>
            <person name="James K.D."/>
            <person name="Lennard N."/>
            <person name="Line A."/>
            <person name="Mayes R."/>
            <person name="Moule S."/>
            <person name="Mungall K."/>
            <person name="Ormond D."/>
            <person name="Quail M.A."/>
            <person name="Rabbinowitsch E."/>
            <person name="Rutherford K.M."/>
            <person name="Sanders M."/>
            <person name="Sharp S."/>
            <person name="Simmonds M."/>
            <person name="Stevens K."/>
            <person name="Whitehead S."/>
            <person name="Barrell B.G."/>
            <person name="Spratt B.G."/>
            <person name="Parkhill J."/>
        </authorList>
    </citation>
    <scope>NUCLEOTIDE SEQUENCE [LARGE SCALE GENOMIC DNA]</scope>
    <source>
        <strain>MRSA252</strain>
    </source>
</reference>
<evidence type="ECO:0000255" key="1">
    <source>
        <dbReference type="HAMAP-Rule" id="MF_00274"/>
    </source>
</evidence>
<evidence type="ECO:0000256" key="2">
    <source>
        <dbReference type="SAM" id="MobiDB-lite"/>
    </source>
</evidence>
<sequence>MRGGGNMQQMMKQMQKMQKKMAQEQEKLKEERIVGTAGGGMVAVTVTGHKEVVDVEIKEEAVDPDDIEMLQDLVLAATNEAMNKADELTQERLGKHTQGLNIPGM</sequence>